<sequence length="401" mass="45857">MVKFDSGSESEMTNGDDLHINSKHEVKSRMANGNGVHNVPDHDQFQDRAEMEVLILPDLFSSLMSVPARENPHYASVKADADEWISSVINADAKWASRNKRVDFTYLASIWAPDCSAFALRTSADWNSWAFLFDDQFDEGHLSNDLDGAINEIARTREIMEGTAPRYTADSEHPIRYVFQTLCDRVKQSPEGFYAGKPSSERFYRRWMWAHELYWEGLVAQVRTNVEGRSFTRGPEEYLAMRRGSLGAYPALVNNEWAYGIDLPEEVADHPLVFEIMVIMSDQILLVNDILSYEKDLRLGVDHNMVRLLKAKGLSTQQAINEVGVMINNCYRRYYRALSELPCFGEEADRALLGYLEVEKNHALGSLLWSYKTGRYFKSKEDGARVRKTRELLIPKKMAAL</sequence>
<dbReference type="EC" id="4.2.3.165" evidence="3"/>
<dbReference type="EMBL" id="FJOF01000009">
    <property type="protein sequence ID" value="CZR45361.1"/>
    <property type="molecule type" value="Genomic_DNA"/>
</dbReference>
<dbReference type="RefSeq" id="XP_031085895.1">
    <property type="nucleotide sequence ID" value="XM_031220213.1"/>
</dbReference>
<dbReference type="SMR" id="A0A1L7VZE7"/>
<dbReference type="GeneID" id="42060320"/>
<dbReference type="VEuPathDB" id="FungiDB:FPRO_15464"/>
<dbReference type="UniPathway" id="UPA00213"/>
<dbReference type="Proteomes" id="UP000183971">
    <property type="component" value="Unassembled WGS sequence"/>
</dbReference>
<dbReference type="GO" id="GO:0046872">
    <property type="term" value="F:metal ion binding"/>
    <property type="evidence" value="ECO:0007669"/>
    <property type="project" value="UniProtKB-KW"/>
</dbReference>
<dbReference type="GO" id="GO:0010333">
    <property type="term" value="F:terpene synthase activity"/>
    <property type="evidence" value="ECO:0007669"/>
    <property type="project" value="InterPro"/>
</dbReference>
<dbReference type="GO" id="GO:0016114">
    <property type="term" value="P:terpenoid biosynthetic process"/>
    <property type="evidence" value="ECO:0007669"/>
    <property type="project" value="UniProtKB-UniPathway"/>
</dbReference>
<dbReference type="Gene3D" id="1.10.600.10">
    <property type="entry name" value="Farnesyl Diphosphate Synthase"/>
    <property type="match status" value="1"/>
</dbReference>
<dbReference type="InterPro" id="IPR008949">
    <property type="entry name" value="Isoprenoid_synthase_dom_sf"/>
</dbReference>
<dbReference type="InterPro" id="IPR034686">
    <property type="entry name" value="Terpene_cyclase-like_2"/>
</dbReference>
<dbReference type="PANTHER" id="PTHR35201:SF4">
    <property type="entry name" value="BETA-PINACENE SYNTHASE-RELATED"/>
    <property type="match status" value="1"/>
</dbReference>
<dbReference type="PANTHER" id="PTHR35201">
    <property type="entry name" value="TERPENE SYNTHASE"/>
    <property type="match status" value="1"/>
</dbReference>
<dbReference type="Pfam" id="PF19086">
    <property type="entry name" value="Terpene_syn_C_2"/>
    <property type="match status" value="1"/>
</dbReference>
<dbReference type="SFLD" id="SFLDS00005">
    <property type="entry name" value="Isoprenoid_Synthase_Type_I"/>
    <property type="match status" value="1"/>
</dbReference>
<dbReference type="SFLD" id="SFLDG01020">
    <property type="entry name" value="Terpene_Cyclase_Like_2"/>
    <property type="match status" value="1"/>
</dbReference>
<dbReference type="SUPFAM" id="SSF48576">
    <property type="entry name" value="Terpenoid synthases"/>
    <property type="match status" value="1"/>
</dbReference>
<comment type="function">
    <text evidence="3">Catalyzes the conversion of (2E,6E)-farnesyl diphosphate (FPP) to yield the bicyclic sesquiterpene guaia-6,10(14)-diene via a 1,10-cyclization, which requires the abstraction of the pyrophosphate from FPP to yield the (E,E)-germacradienyl cation. The only accepted substrate is farnesyl diphosphate (FPP).</text>
</comment>
<comment type="catalytic activity">
    <reaction evidence="3">
        <text>(2E,6E)-farnesyl diphosphate = (1R,4R,5S)-(-)-guaia-6,10(14)-diene + diphosphate</text>
        <dbReference type="Rhea" id="RHEA:53668"/>
        <dbReference type="ChEBI" id="CHEBI:33019"/>
        <dbReference type="ChEBI" id="CHEBI:137563"/>
        <dbReference type="ChEBI" id="CHEBI:175763"/>
        <dbReference type="EC" id="4.2.3.165"/>
    </reaction>
</comment>
<comment type="cofactor">
    <cofactor evidence="1">
        <name>Mg(2+)</name>
        <dbReference type="ChEBI" id="CHEBI:18420"/>
    </cofactor>
    <text evidence="1">Binds 3 Mg(2+) ions per subunit.</text>
</comment>
<comment type="pathway">
    <text evidence="5">Secondary metabolite biosynthesis; terpenoid biosynthesis.</text>
</comment>
<comment type="domain">
    <text evidence="6">The Asp-Asp-Xaa-Xaa-Asp (DDXXD) motif is important for the catalytic activity, presumably through binding to Mg(2+).</text>
</comment>
<comment type="similarity">
    <text evidence="5">Belongs to the terpene synthase family.</text>
</comment>
<reference key="1">
    <citation type="journal article" date="2016" name="Genome Biol. Evol.">
        <title>Comparative 'omics' of the Fusarium fujikuroi species complex highlights differences in genetic potential and metabolite synthesis.</title>
        <authorList>
            <person name="Niehaus E.-M."/>
            <person name="Muensterkoetter M."/>
            <person name="Proctor R.H."/>
            <person name="Brown D.W."/>
            <person name="Sharon A."/>
            <person name="Idan Y."/>
            <person name="Oren-Young L."/>
            <person name="Sieber C.M."/>
            <person name="Novak O."/>
            <person name="Pencik A."/>
            <person name="Tarkowska D."/>
            <person name="Hromadova K."/>
            <person name="Freeman S."/>
            <person name="Maymon M."/>
            <person name="Elazar M."/>
            <person name="Youssef S.A."/>
            <person name="El-Shabrawy E.S.M."/>
            <person name="Shalaby A.B.A."/>
            <person name="Houterman P."/>
            <person name="Brock N.L."/>
            <person name="Burkhardt I."/>
            <person name="Tsavkelova E.A."/>
            <person name="Dickschat J.S."/>
            <person name="Galuszka P."/>
            <person name="Gueldener U."/>
            <person name="Tudzynski B."/>
        </authorList>
    </citation>
    <scope>NUCLEOTIDE SEQUENCE [LARGE SCALE GENOMIC DNA]</scope>
    <source>
        <strain>ET1</strain>
    </source>
</reference>
<reference key="2">
    <citation type="journal article" date="2016" name="Angew. Chem. Int. Ed.">
        <title>Mechanistic characterisation of two sesquiterpene cyclases from the plant pathogenic fungus Fusarium fujikuroi.</title>
        <authorList>
            <person name="Burkhardt I."/>
            <person name="Siemon T."/>
            <person name="Henrot M."/>
            <person name="Studt L."/>
            <person name="Roesler S."/>
            <person name="Tudzynski B."/>
            <person name="Christmann M."/>
            <person name="Dickschat J.S."/>
        </authorList>
    </citation>
    <scope>FUNCTION</scope>
    <scope>CATALYTIC ACTIVITY</scope>
    <scope>SUBSTRATE SPECIFICITY</scope>
    <scope>DOMAIN</scope>
    <scope>REACTION MECHANISM</scope>
</reference>
<protein>
    <recommendedName>
        <fullName evidence="4">(1R,4R,5S)-(-)-guaia-6,10(14)-diene synthase</fullName>
        <ecNumber evidence="3">4.2.3.165</ecNumber>
    </recommendedName>
    <alternativeName>
        <fullName evidence="4">Sesquiterpene cyclase</fullName>
    </alternativeName>
    <alternativeName>
        <fullName evidence="4">Terpene synthase</fullName>
    </alternativeName>
    <alternativeName>
        <fullName evidence="4">Type I terpene cyclase</fullName>
    </alternativeName>
</protein>
<keyword id="KW-0456">Lyase</keyword>
<keyword id="KW-0460">Magnesium</keyword>
<keyword id="KW-0479">Metal-binding</keyword>
<accession>A0A1L7VZE7</accession>
<organism>
    <name type="scientific">Fusarium proliferatum (strain ET1)</name>
    <name type="common">Orchid endophyte fungus</name>
    <dbReference type="NCBI Taxonomy" id="1227346"/>
    <lineage>
        <taxon>Eukaryota</taxon>
        <taxon>Fungi</taxon>
        <taxon>Dikarya</taxon>
        <taxon>Ascomycota</taxon>
        <taxon>Pezizomycotina</taxon>
        <taxon>Sordariomycetes</taxon>
        <taxon>Hypocreomycetidae</taxon>
        <taxon>Hypocreales</taxon>
        <taxon>Nectriaceae</taxon>
        <taxon>Fusarium</taxon>
        <taxon>Fusarium fujikuroi species complex</taxon>
    </lineage>
</organism>
<gene>
    <name evidence="7" type="ORF">FPRO_15464</name>
</gene>
<feature type="chain" id="PRO_0000443319" description="(1R,4R,5S)-(-)-guaia-6,10(14)-diene synthase">
    <location>
        <begin position="1"/>
        <end position="401"/>
    </location>
</feature>
<feature type="region of interest" description="Disordered" evidence="2">
    <location>
        <begin position="1"/>
        <end position="21"/>
    </location>
</feature>
<feature type="short sequence motif" description="DDXXD motif" evidence="6">
    <location>
        <begin position="134"/>
        <end position="138"/>
    </location>
</feature>
<feature type="binding site" evidence="1">
    <location>
        <position position="134"/>
    </location>
    <ligand>
        <name>Mg(2+)</name>
        <dbReference type="ChEBI" id="CHEBI:18420"/>
        <label>1</label>
    </ligand>
</feature>
<feature type="binding site" evidence="1">
    <location>
        <position position="139"/>
    </location>
    <ligand>
        <name>Mg(2+)</name>
        <dbReference type="ChEBI" id="CHEBI:18420"/>
        <label>1</label>
    </ligand>
</feature>
<feature type="binding site" evidence="1">
    <location>
        <position position="139"/>
    </location>
    <ligand>
        <name>Mg(2+)</name>
        <dbReference type="ChEBI" id="CHEBI:18420"/>
        <label>2</label>
    </ligand>
</feature>
<feature type="binding site" evidence="1">
    <location>
        <position position="242"/>
    </location>
    <ligand>
        <name>substrate</name>
    </ligand>
</feature>
<feature type="binding site" evidence="1">
    <location>
        <position position="288"/>
    </location>
    <ligand>
        <name>Mg(2+)</name>
        <dbReference type="ChEBI" id="CHEBI:18420"/>
        <label>3</label>
    </ligand>
</feature>
<feature type="binding site" evidence="1">
    <location>
        <position position="292"/>
    </location>
    <ligand>
        <name>Mg(2+)</name>
        <dbReference type="ChEBI" id="CHEBI:18420"/>
        <label>3</label>
    </ligand>
</feature>
<feature type="binding site" evidence="1">
    <location>
        <position position="295"/>
    </location>
    <ligand>
        <name>substrate</name>
    </ligand>
</feature>
<feature type="binding site" evidence="1">
    <location>
        <position position="296"/>
    </location>
    <ligand>
        <name>Mg(2+)</name>
        <dbReference type="ChEBI" id="CHEBI:18420"/>
        <label>3</label>
    </ligand>
</feature>
<feature type="binding site" evidence="1">
    <location>
        <begin position="375"/>
        <end position="376"/>
    </location>
    <ligand>
        <name>substrate</name>
    </ligand>
</feature>
<evidence type="ECO:0000250" key="1">
    <source>
        <dbReference type="UniProtKB" id="B5HDJ6"/>
    </source>
</evidence>
<evidence type="ECO:0000256" key="2">
    <source>
        <dbReference type="SAM" id="MobiDB-lite"/>
    </source>
</evidence>
<evidence type="ECO:0000269" key="3">
    <source>
    </source>
</evidence>
<evidence type="ECO:0000303" key="4">
    <source>
    </source>
</evidence>
<evidence type="ECO:0000305" key="5"/>
<evidence type="ECO:0000305" key="6">
    <source>
    </source>
</evidence>
<evidence type="ECO:0000312" key="7">
    <source>
        <dbReference type="EMBL" id="CZR45361.1"/>
    </source>
</evidence>
<name>GUDIS_FUSPR</name>
<proteinExistence type="evidence at protein level"/>